<feature type="chain" id="PRO_0000397612" description="rRNA biogenesis protein RRP36">
    <location>
        <begin position="1"/>
        <end position="349"/>
    </location>
</feature>
<feature type="region of interest" description="Disordered" evidence="3">
    <location>
        <begin position="1"/>
        <end position="174"/>
    </location>
</feature>
<feature type="region of interest" description="Disordered" evidence="3">
    <location>
        <begin position="259"/>
        <end position="278"/>
    </location>
</feature>
<feature type="region of interest" description="Disordered" evidence="3">
    <location>
        <begin position="313"/>
        <end position="349"/>
    </location>
</feature>
<feature type="coiled-coil region" evidence="2">
    <location>
        <begin position="101"/>
        <end position="147"/>
    </location>
</feature>
<feature type="coiled-coil region" evidence="2">
    <location>
        <begin position="227"/>
        <end position="319"/>
    </location>
</feature>
<feature type="compositionally biased region" description="Acidic residues" evidence="3">
    <location>
        <begin position="36"/>
        <end position="64"/>
    </location>
</feature>
<feature type="compositionally biased region" description="Basic and acidic residues" evidence="3">
    <location>
        <begin position="117"/>
        <end position="158"/>
    </location>
</feature>
<feature type="compositionally biased region" description="Basic and acidic residues" evidence="3">
    <location>
        <begin position="265"/>
        <end position="276"/>
    </location>
</feature>
<feature type="compositionally biased region" description="Basic and acidic residues" evidence="3">
    <location>
        <begin position="313"/>
        <end position="325"/>
    </location>
</feature>
<feature type="compositionally biased region" description="Basic and acidic residues" evidence="3">
    <location>
        <begin position="333"/>
        <end position="349"/>
    </location>
</feature>
<proteinExistence type="inferred from homology"/>
<evidence type="ECO:0000250" key="1"/>
<evidence type="ECO:0000255" key="2"/>
<evidence type="ECO:0000256" key="3">
    <source>
        <dbReference type="SAM" id="MobiDB-lite"/>
    </source>
</evidence>
<evidence type="ECO:0000305" key="4"/>
<keyword id="KW-0175">Coiled coil</keyword>
<keyword id="KW-0539">Nucleus</keyword>
<keyword id="KW-1185">Reference proteome</keyword>
<keyword id="KW-0687">Ribonucleoprotein</keyword>
<keyword id="KW-0690">Ribosome biogenesis</keyword>
<keyword id="KW-0698">rRNA processing</keyword>
<name>RRP36_ARTBC</name>
<sequence length="349" mass="40239">MALSGILNKRVTAYRADENELEDDFSSSEELNTLSSEDDEDEDENDESENEETPDNTSSEDDGDNDIKSSLSQISFGALAKAQQSLGPLKKGAKRKHGSEEEEEEEENNTNTKYKKSKSDALNELRERIRRAKEEKASKSERSRDSELLDKKHKEARSSKHAPAVQSSKYAVSRRRVVVDGENVAQAKSRDPRFDSAVQSYSHGVKSSSYSTSHSDLAAAKNYAFLNEYRDAELKELEEKLRRSKEDDEKARLKKMITSMKDRKRAMENRERERQVLAKHRKKERELIKEGKKEKAWFLKKADLKKEALKEKYESMGAKERQKGIERRRKKVASKEKKEMPRSRRIVEG</sequence>
<accession>D4AIP9</accession>
<gene>
    <name type="primary">RRP36</name>
    <name type="ORF">ARB_04145</name>
</gene>
<comment type="function">
    <text evidence="1">Component of the 90S pre-ribosome involved in the maturation of rRNAs. Required for early cleavages of the pre-RNAs in the 40S ribosomal subunit maturation pathway (By similarity).</text>
</comment>
<comment type="subunit">
    <text evidence="1">Associates with 90S and pre-40S pre-ribosomal particles.</text>
</comment>
<comment type="subcellular location">
    <subcellularLocation>
        <location evidence="1">Nucleus</location>
        <location evidence="1">Nucleolus</location>
    </subcellularLocation>
</comment>
<comment type="similarity">
    <text evidence="4">Belongs to the RRP36 family.</text>
</comment>
<protein>
    <recommendedName>
        <fullName>rRNA biogenesis protein RRP36</fullName>
    </recommendedName>
    <alternativeName>
        <fullName>Ribosomal RNA-processing protein 36</fullName>
    </alternativeName>
</protein>
<dbReference type="EMBL" id="ABSU01000001">
    <property type="protein sequence ID" value="EFE36622.1"/>
    <property type="molecule type" value="Genomic_DNA"/>
</dbReference>
<dbReference type="RefSeq" id="XP_003017267.1">
    <property type="nucleotide sequence ID" value="XM_003017221.1"/>
</dbReference>
<dbReference type="SMR" id="D4AIP9"/>
<dbReference type="STRING" id="663331.D4AIP9"/>
<dbReference type="GeneID" id="9522352"/>
<dbReference type="KEGG" id="abe:ARB_04145"/>
<dbReference type="eggNOG" id="KOG3190">
    <property type="taxonomic scope" value="Eukaryota"/>
</dbReference>
<dbReference type="HOGENOM" id="CLU_048802_0_0_1"/>
<dbReference type="OMA" id="ERKEMPW"/>
<dbReference type="OrthoDB" id="448446at2759"/>
<dbReference type="Proteomes" id="UP000008866">
    <property type="component" value="Unassembled WGS sequence"/>
</dbReference>
<dbReference type="GO" id="GO:0030686">
    <property type="term" value="C:90S preribosome"/>
    <property type="evidence" value="ECO:0007669"/>
    <property type="project" value="TreeGrafter"/>
</dbReference>
<dbReference type="GO" id="GO:0005730">
    <property type="term" value="C:nucleolus"/>
    <property type="evidence" value="ECO:0007669"/>
    <property type="project" value="UniProtKB-SubCell"/>
</dbReference>
<dbReference type="GO" id="GO:0000462">
    <property type="term" value="P:maturation of SSU-rRNA from tricistronic rRNA transcript (SSU-rRNA, 5.8S rRNA, LSU-rRNA)"/>
    <property type="evidence" value="ECO:0007669"/>
    <property type="project" value="TreeGrafter"/>
</dbReference>
<dbReference type="InterPro" id="IPR009292">
    <property type="entry name" value="RRP36"/>
</dbReference>
<dbReference type="PANTHER" id="PTHR21738">
    <property type="entry name" value="RIBOSOMAL RNA PROCESSING PROTEIN 36 HOMOLOG"/>
    <property type="match status" value="1"/>
</dbReference>
<dbReference type="PANTHER" id="PTHR21738:SF0">
    <property type="entry name" value="RIBOSOMAL RNA PROCESSING PROTEIN 36 HOMOLOG"/>
    <property type="match status" value="1"/>
</dbReference>
<dbReference type="Pfam" id="PF06102">
    <property type="entry name" value="RRP36"/>
    <property type="match status" value="1"/>
</dbReference>
<organism>
    <name type="scientific">Arthroderma benhamiae (strain ATCC MYA-4681 / CBS 112371)</name>
    <name type="common">Trichophyton mentagrophytes</name>
    <dbReference type="NCBI Taxonomy" id="663331"/>
    <lineage>
        <taxon>Eukaryota</taxon>
        <taxon>Fungi</taxon>
        <taxon>Dikarya</taxon>
        <taxon>Ascomycota</taxon>
        <taxon>Pezizomycotina</taxon>
        <taxon>Eurotiomycetes</taxon>
        <taxon>Eurotiomycetidae</taxon>
        <taxon>Onygenales</taxon>
        <taxon>Arthrodermataceae</taxon>
        <taxon>Trichophyton</taxon>
    </lineage>
</organism>
<reference key="1">
    <citation type="journal article" date="2011" name="Genome Biol.">
        <title>Comparative and functional genomics provide insights into the pathogenicity of dermatophytic fungi.</title>
        <authorList>
            <person name="Burmester A."/>
            <person name="Shelest E."/>
            <person name="Gloeckner G."/>
            <person name="Heddergott C."/>
            <person name="Schindler S."/>
            <person name="Staib P."/>
            <person name="Heidel A."/>
            <person name="Felder M."/>
            <person name="Petzold A."/>
            <person name="Szafranski K."/>
            <person name="Feuermann M."/>
            <person name="Pedruzzi I."/>
            <person name="Priebe S."/>
            <person name="Groth M."/>
            <person name="Winkler R."/>
            <person name="Li W."/>
            <person name="Kniemeyer O."/>
            <person name="Schroeckh V."/>
            <person name="Hertweck C."/>
            <person name="Hube B."/>
            <person name="White T.C."/>
            <person name="Platzer M."/>
            <person name="Guthke R."/>
            <person name="Heitman J."/>
            <person name="Woestemeyer J."/>
            <person name="Zipfel P.F."/>
            <person name="Monod M."/>
            <person name="Brakhage A.A."/>
        </authorList>
    </citation>
    <scope>NUCLEOTIDE SEQUENCE [LARGE SCALE GENOMIC DNA]</scope>
    <source>
        <strain>ATCC MYA-4681 / CBS 112371</strain>
    </source>
</reference>